<dbReference type="EMBL" id="AF144305">
    <property type="protein sequence ID" value="AAD51927.1"/>
    <property type="molecule type" value="Genomic_RNA"/>
</dbReference>
<dbReference type="EMBL" id="AF148678">
    <property type="protein sequence ID" value="AAD37782.1"/>
    <property type="molecule type" value="mRNA"/>
</dbReference>
<dbReference type="RefSeq" id="YP_308669.1">
    <property type="nucleotide sequence ID" value="NC_007362.1"/>
</dbReference>
<dbReference type="PDB" id="3S11">
    <property type="method" value="X-ray"/>
    <property type="resolution" value="2.50 A"/>
    <property type="chains" value="A/C/E=17-339"/>
</dbReference>
<dbReference type="PDB" id="4MHH">
    <property type="method" value="X-ray"/>
    <property type="resolution" value="3.56 A"/>
    <property type="chains" value="A/C/E=17-346"/>
</dbReference>
<dbReference type="PDB" id="4MHI">
    <property type="method" value="X-ray"/>
    <property type="resolution" value="2.60 A"/>
    <property type="chains" value="A/C/E/G/I/K/M/O/Q=17-346, B/D/F/H/J/L/N/P/R=347-521"/>
</dbReference>
<dbReference type="PDB" id="4MHJ">
    <property type="method" value="X-ray"/>
    <property type="resolution" value="6.98 A"/>
    <property type="chains" value="A/C/G/M/O/S=17-346, B/D/I/N/P/U=347-521"/>
</dbReference>
<dbReference type="PDBsum" id="3S11"/>
<dbReference type="PDBsum" id="4MHH"/>
<dbReference type="PDBsum" id="4MHI"/>
<dbReference type="PDBsum" id="4MHJ"/>
<dbReference type="SMR" id="Q9Q0U6"/>
<dbReference type="UniLectin" id="Q9Q0U6"/>
<dbReference type="GlyCosmos" id="Q9Q0U6">
    <property type="glycosylation" value="6 sites, No reported glycans"/>
</dbReference>
<dbReference type="ABCD" id="Q9Q0U6">
    <property type="antibodies" value="2 sequenced antibodies"/>
</dbReference>
<dbReference type="GeneID" id="3654620"/>
<dbReference type="KEGG" id="vg:3654620"/>
<dbReference type="OrthoDB" id="2813at10239"/>
<dbReference type="EvolutionaryTrace" id="Q9Q0U6"/>
<dbReference type="Proteomes" id="UP000131152">
    <property type="component" value="Genome"/>
</dbReference>
<dbReference type="GO" id="GO:0020002">
    <property type="term" value="C:host cell plasma membrane"/>
    <property type="evidence" value="ECO:0007669"/>
    <property type="project" value="UniProtKB-SubCell"/>
</dbReference>
<dbReference type="GO" id="GO:0016020">
    <property type="term" value="C:membrane"/>
    <property type="evidence" value="ECO:0007669"/>
    <property type="project" value="UniProtKB-UniRule"/>
</dbReference>
<dbReference type="GO" id="GO:0019031">
    <property type="term" value="C:viral envelope"/>
    <property type="evidence" value="ECO:0007669"/>
    <property type="project" value="UniProtKB-UniRule"/>
</dbReference>
<dbReference type="GO" id="GO:0055036">
    <property type="term" value="C:virion membrane"/>
    <property type="evidence" value="ECO:0007669"/>
    <property type="project" value="UniProtKB-SubCell"/>
</dbReference>
<dbReference type="GO" id="GO:0046789">
    <property type="term" value="F:host cell surface receptor binding"/>
    <property type="evidence" value="ECO:0007669"/>
    <property type="project" value="UniProtKB-UniRule"/>
</dbReference>
<dbReference type="GO" id="GO:0075512">
    <property type="term" value="P:clathrin-dependent endocytosis of virus by host cell"/>
    <property type="evidence" value="ECO:0007669"/>
    <property type="project" value="UniProtKB-UniRule"/>
</dbReference>
<dbReference type="GO" id="GO:0039654">
    <property type="term" value="P:fusion of virus membrane with host endosome membrane"/>
    <property type="evidence" value="ECO:0007669"/>
    <property type="project" value="UniProtKB-UniRule"/>
</dbReference>
<dbReference type="GO" id="GO:0019064">
    <property type="term" value="P:fusion of virus membrane with host plasma membrane"/>
    <property type="evidence" value="ECO:0007669"/>
    <property type="project" value="InterPro"/>
</dbReference>
<dbReference type="GO" id="GO:0046761">
    <property type="term" value="P:viral budding from plasma membrane"/>
    <property type="evidence" value="ECO:0007669"/>
    <property type="project" value="UniProtKB-UniRule"/>
</dbReference>
<dbReference type="GO" id="GO:0019062">
    <property type="term" value="P:virion attachment to host cell"/>
    <property type="evidence" value="ECO:0007669"/>
    <property type="project" value="UniProtKB-KW"/>
</dbReference>
<dbReference type="FunFam" id="3.90.209.20:FF:000001">
    <property type="entry name" value="Hemagglutinin"/>
    <property type="match status" value="1"/>
</dbReference>
<dbReference type="Gene3D" id="3.90.20.10">
    <property type="match status" value="1"/>
</dbReference>
<dbReference type="Gene3D" id="3.90.209.20">
    <property type="match status" value="1"/>
</dbReference>
<dbReference type="Gene3D" id="2.10.77.10">
    <property type="entry name" value="Hemagglutinin Chain A, Domain 2"/>
    <property type="match status" value="1"/>
</dbReference>
<dbReference type="HAMAP" id="MF_04072">
    <property type="entry name" value="INFV_HEMA"/>
    <property type="match status" value="1"/>
</dbReference>
<dbReference type="InterPro" id="IPR008980">
    <property type="entry name" value="Capsid_hemagglutn"/>
</dbReference>
<dbReference type="InterPro" id="IPR013828">
    <property type="entry name" value="Hemagglutn_HA1_a/b_dom_sf"/>
</dbReference>
<dbReference type="InterPro" id="IPR000149">
    <property type="entry name" value="Hemagglutn_influenz_A"/>
</dbReference>
<dbReference type="InterPro" id="IPR001364">
    <property type="entry name" value="Hemagglutn_influenz_A/B"/>
</dbReference>
<dbReference type="Pfam" id="PF00509">
    <property type="entry name" value="Hemagglutinin"/>
    <property type="match status" value="1"/>
</dbReference>
<dbReference type="PRINTS" id="PR00330">
    <property type="entry name" value="HEMAGGLUTN1"/>
</dbReference>
<dbReference type="PRINTS" id="PR00329">
    <property type="entry name" value="HEMAGGLUTN12"/>
</dbReference>
<dbReference type="SUPFAM" id="SSF58064">
    <property type="entry name" value="Influenza hemagglutinin (stalk)"/>
    <property type="match status" value="1"/>
</dbReference>
<dbReference type="SUPFAM" id="SSF49818">
    <property type="entry name" value="Viral protein domain"/>
    <property type="match status" value="1"/>
</dbReference>
<sequence>MEKIVLLLAIVSLVKSDQICIGYHANNSTEQVDTIMEKNVTVTHAQDILEKTHNGKLCDLNGVKPLILRDCSVAGWLLGNPMCDEFINVPEWSYIVEKASPANDLCYPGDFNDYEELKHLLSRTNHFEKIQIIPKSSWSNHDASSGVSSACPYHGRSSFFRNVVWLIKKNSAYPTIKRSYNNTNQEDLLVLWGIHHPNDAAEQTKLYQNPTTYISVGTSTLNQRLVPEIATRPKVNGQSGRMEFFWTILKPNDAINFESNGNFIAPEYAYKIVKKGDSAIMKSELEYGNCNTKCQTPMGAINSSMPFHNIHPLTIGECPKYVKSNRLVLATGLRNTPQRERRRKKRGLFGAIAGFIEGGWQGMVDGWYGYHHSNEQGSGYAADKESTQKAIDGVTNKVNSIIDKMNTQFEAVGREFNNLERRIENLNKQMEDGFLDVWTYNAELLVLMENERTLDFHDSNVKNLYDKVRLQLRDNAKELGNGCFEFYHKCDNECMESVKNGTYDYPQYSEEARLNREEISGVKLESMGTYQILSIYSTVASSLALAIMVAGLSLWMCSNGSLQCRICI</sequence>
<protein>
    <recommendedName>
        <fullName evidence="1">Hemagglutinin</fullName>
    </recommendedName>
    <component>
        <recommendedName>
            <fullName evidence="1">Hemagglutinin HA1 chain</fullName>
        </recommendedName>
    </component>
    <component>
        <recommendedName>
            <fullName evidence="1">Hemagglutinin HA2 chain</fullName>
        </recommendedName>
    </component>
</protein>
<accession>Q9Q0U6</accession>
<accession>Q9WNX2</accession>
<comment type="function">
    <text evidence="1">Binds to sialic acid-containing receptors on the cell surface, bringing about the attachment of the virus particle to the cell. This attachment induces virion internalization either through clathrin-dependent endocytosis or through clathrin- and caveolin-independent pathway. Plays a major role in the determination of host range restriction and virulence. Class I viral fusion protein. Responsible for penetration of the virus into the cell cytoplasm by mediating the fusion of the membrane of the endocytosed virus particle with the endosomal membrane. Low pH in endosomes induces an irreversible conformational change in HA2, releasing the fusion hydrophobic peptide. Several trimers are required to form a competent fusion pore.</text>
</comment>
<comment type="subunit">
    <text evidence="1">Homotrimer of disulfide-linked HA1-HA2.</text>
</comment>
<comment type="subcellular location">
    <subcellularLocation>
        <location evidence="1">Virion membrane</location>
        <topology evidence="1">Single-pass type I membrane protein</topology>
    </subcellularLocation>
    <subcellularLocation>
        <location evidence="1">Host apical cell membrane</location>
        <topology evidence="1">Single-pass type I membrane protein</topology>
    </subcellularLocation>
    <text evidence="1">Targeted to the apical plasma membrane in epithelial polarized cells through a signal present in the transmembrane domain. Associated with glycosphingolipid- and cholesterol-enriched detergent-resistant lipid rafts.</text>
</comment>
<comment type="PTM">
    <text evidence="1">Palmitoylated.</text>
</comment>
<comment type="PTM">
    <text evidence="1">In natural infection, inactive HA is matured into HA1 and HA2 outside the cell by one or more trypsin-like, arginine-specific endoprotease secreted by the bronchial epithelial cells. One identified protease that may be involved in this process is secreted in lungs by club cells.</text>
</comment>
<comment type="miscellaneous">
    <text>Major glycoprotein, comprises over 80% of the envelope proteins present in virus particle.</text>
</comment>
<comment type="miscellaneous">
    <text>The extent of infection into host organism is determined by HA. Influenza viruses bud from the apical surface of polarized epithelial cells (e.g. bronchial epithelial cells) into lumen of lungs and are therefore usually pneumotropic. The reason is that HA is cleaved by tryptase clara which is restricted to lungs. However, HAs of H5 and H7 pantropic avian viruses subtypes can be cleaved by furin and subtilisin-type enzymes, allowing the virus to grow in other organs than lungs.</text>
</comment>
<comment type="miscellaneous">
    <text evidence="2">The influenza A genome consist of 8 RNA segments. Genetic variation of hemagglutinin and/or neuraminidase genes results in the emergence of new influenza strains. The mechanism of variation can be the result of point mutations or the result of genetic reassortment between segments of two different strains.</text>
</comment>
<comment type="similarity">
    <text evidence="1">Belongs to the influenza viruses hemagglutinin family.</text>
</comment>
<proteinExistence type="evidence at protein level"/>
<name>HEMA_I96A0</name>
<reference key="1">
    <citation type="journal article" date="1999" name="Virology">
        <title>Genetic characterization of the pathogenic influenza A/Goose/Guangdong/1/96 (H5N1) virus: similarity of its hemagglutinin gene to those of H5N1 viruses from the 1997 outbreaks in Hong Kong.</title>
        <authorList>
            <person name="Xu X."/>
            <person name="Subbarao K."/>
            <person name="Cox N.J."/>
            <person name="Guo Y."/>
        </authorList>
    </citation>
    <scope>NUCLEOTIDE SEQUENCE [GENOMIC RNA]</scope>
</reference>
<reference key="2">
    <citation type="journal article" date="1999" name="Zhongguo Nong Ye Ke Xue">
        <title>Molecular analysis of hemagglutinin gene of a goose origin highly pathogenic avian influenza virus.</title>
        <authorList>
            <person name="Chen H."/>
            <person name="Yu K."/>
            <person name="Bu Z."/>
        </authorList>
    </citation>
    <scope>NUCLEOTIDE SEQUENCE [MRNA]</scope>
</reference>
<evidence type="ECO:0000255" key="1">
    <source>
        <dbReference type="HAMAP-Rule" id="MF_04072"/>
    </source>
</evidence>
<evidence type="ECO:0000305" key="2"/>
<evidence type="ECO:0007829" key="3">
    <source>
        <dbReference type="PDB" id="3S11"/>
    </source>
</evidence>
<evidence type="ECO:0007829" key="4">
    <source>
        <dbReference type="PDB" id="4MHI"/>
    </source>
</evidence>
<gene>
    <name evidence="1" type="primary">HA</name>
</gene>
<organism>
    <name type="scientific">Influenza A virus (strain A/Goose/Guangdong/1/1996 H5N1 genotype Gs/Gd)</name>
    <dbReference type="NCBI Taxonomy" id="93838"/>
    <lineage>
        <taxon>Viruses</taxon>
        <taxon>Riboviria</taxon>
        <taxon>Orthornavirae</taxon>
        <taxon>Negarnaviricota</taxon>
        <taxon>Polyploviricotina</taxon>
        <taxon>Insthoviricetes</taxon>
        <taxon>Articulavirales</taxon>
        <taxon>Orthomyxoviridae</taxon>
        <taxon>Alphainfluenzavirus</taxon>
        <taxon>Alphainfluenzavirus influenzae</taxon>
        <taxon>Influenza A virus</taxon>
    </lineage>
</organism>
<feature type="signal peptide" evidence="1">
    <location>
        <begin position="1"/>
        <end position="16"/>
    </location>
</feature>
<feature type="chain" id="PRO_0000440536" description="Hemagglutinin" evidence="1">
    <location>
        <begin position="17"/>
        <end position="568"/>
    </location>
</feature>
<feature type="chain" id="PRO_0000440537" description="Hemagglutinin HA1 chain" evidence="1">
    <location>
        <begin position="17"/>
        <end position="345"/>
    </location>
</feature>
<feature type="chain" id="PRO_0000280186" description="Hemagglutinin HA2 chain" evidence="1">
    <location>
        <begin position="347"/>
        <end position="568"/>
    </location>
</feature>
<feature type="topological domain" description="Extracellular" evidence="1">
    <location>
        <begin position="17"/>
        <end position="531"/>
    </location>
</feature>
<feature type="transmembrane region" description="Helical" evidence="1">
    <location>
        <begin position="532"/>
        <end position="552"/>
    </location>
</feature>
<feature type="topological domain" description="Cytoplasmic" evidence="1">
    <location>
        <begin position="553"/>
        <end position="568"/>
    </location>
</feature>
<feature type="site" description="Cleavage; by host" evidence="1">
    <location>
        <begin position="346"/>
        <end position="347"/>
    </location>
</feature>
<feature type="lipid moiety-binding region" description="S-palmitoyl cysteine; by host" evidence="1">
    <location>
        <position position="557"/>
    </location>
</feature>
<feature type="lipid moiety-binding region" description="S-palmitoyl cysteine; by host" evidence="1">
    <location>
        <position position="564"/>
    </location>
</feature>
<feature type="lipid moiety-binding region" description="S-palmitoyl cysteine; by host" evidence="1">
    <location>
        <position position="567"/>
    </location>
</feature>
<feature type="glycosylation site" description="N-linked (GlcNAc...) asparagine; by host" evidence="1">
    <location>
        <position position="26"/>
    </location>
</feature>
<feature type="glycosylation site" description="N-linked (GlcNAc...) asparagine; by host" evidence="1">
    <location>
        <position position="27"/>
    </location>
</feature>
<feature type="glycosylation site" description="N-linked (GlcNAc...) asparagine; by host" evidence="1">
    <location>
        <position position="39"/>
    </location>
</feature>
<feature type="glycosylation site" description="N-linked (GlcNAc...) asparagine; by host" evidence="1">
    <location>
        <position position="181"/>
    </location>
</feature>
<feature type="glycosylation site" description="N-linked (GlcNAc...) asparagine; by host" evidence="1">
    <location>
        <position position="302"/>
    </location>
</feature>
<feature type="glycosylation site" description="N-linked (GlcNAc...) asparagine; by host" evidence="1">
    <location>
        <position position="500"/>
    </location>
</feature>
<feature type="disulfide bond" description="Interchain (between HA1 and HA2 chains)" evidence="1">
    <location>
        <begin position="20"/>
        <end position="483"/>
    </location>
</feature>
<feature type="disulfide bond" evidence="1">
    <location>
        <begin position="58"/>
        <end position="290"/>
    </location>
</feature>
<feature type="disulfide bond" evidence="1">
    <location>
        <begin position="71"/>
        <end position="83"/>
    </location>
</feature>
<feature type="disulfide bond" evidence="1">
    <location>
        <begin position="106"/>
        <end position="151"/>
    </location>
</feature>
<feature type="disulfide bond" evidence="1">
    <location>
        <begin position="294"/>
        <end position="318"/>
    </location>
</feature>
<feature type="disulfide bond" evidence="1">
    <location>
        <begin position="490"/>
        <end position="494"/>
    </location>
</feature>
<feature type="sequence conflict" description="In Ref. 2; AAD37782." evidence="2" ref="2">
    <original>K</original>
    <variation>R</variation>
    <location>
        <position position="3"/>
    </location>
</feature>
<feature type="sequence conflict" description="In Ref. 2; AAD37782." evidence="2" ref="2">
    <original>K</original>
    <variation>P</variation>
    <location>
        <position position="135"/>
    </location>
</feature>
<feature type="sequence conflict" description="In Ref. 2; AAD37782." evidence="2" ref="2">
    <original>D</original>
    <variation>N</variation>
    <location>
        <position position="365"/>
    </location>
</feature>
<feature type="sequence conflict" description="In Ref. 2; AAD37782." evidence="2" ref="2">
    <original>N</original>
    <variation>H</variation>
    <location>
        <position position="463"/>
    </location>
</feature>
<feature type="strand" evidence="3">
    <location>
        <begin position="18"/>
        <end position="24"/>
    </location>
</feature>
<feature type="strand" evidence="3">
    <location>
        <begin position="38"/>
        <end position="47"/>
    </location>
</feature>
<feature type="strand" evidence="3">
    <location>
        <begin position="55"/>
        <end position="60"/>
    </location>
</feature>
<feature type="helix" evidence="3">
    <location>
        <begin position="73"/>
        <end position="78"/>
    </location>
</feature>
<feature type="helix" evidence="3">
    <location>
        <begin position="81"/>
        <end position="86"/>
    </location>
</feature>
<feature type="strand" evidence="3">
    <location>
        <begin position="95"/>
        <end position="97"/>
    </location>
</feature>
<feature type="strand" evidence="3">
    <location>
        <begin position="102"/>
        <end position="104"/>
    </location>
</feature>
<feature type="strand" evidence="3">
    <location>
        <begin position="109"/>
        <end position="111"/>
    </location>
</feature>
<feature type="helix" evidence="3">
    <location>
        <begin position="114"/>
        <end position="121"/>
    </location>
</feature>
<feature type="strand" evidence="3">
    <location>
        <begin position="124"/>
        <end position="133"/>
    </location>
</feature>
<feature type="helix" evidence="3">
    <location>
        <begin position="135"/>
        <end position="137"/>
    </location>
</feature>
<feature type="strand" evidence="3">
    <location>
        <begin position="139"/>
        <end position="142"/>
    </location>
</feature>
<feature type="strand" evidence="3">
    <location>
        <begin position="148"/>
        <end position="153"/>
    </location>
</feature>
<feature type="strand" evidence="3">
    <location>
        <begin position="156"/>
        <end position="158"/>
    </location>
</feature>
<feature type="strand" evidence="3">
    <location>
        <begin position="163"/>
        <end position="165"/>
    </location>
</feature>
<feature type="strand" evidence="3">
    <location>
        <begin position="169"/>
        <end position="171"/>
    </location>
</feature>
<feature type="strand" evidence="3">
    <location>
        <begin position="176"/>
        <end position="181"/>
    </location>
</feature>
<feature type="strand" evidence="3">
    <location>
        <begin position="184"/>
        <end position="186"/>
    </location>
</feature>
<feature type="strand" evidence="3">
    <location>
        <begin position="188"/>
        <end position="196"/>
    </location>
</feature>
<feature type="helix" evidence="3">
    <location>
        <begin position="200"/>
        <end position="207"/>
    </location>
</feature>
<feature type="strand" evidence="3">
    <location>
        <begin position="214"/>
        <end position="217"/>
    </location>
</feature>
<feature type="strand" evidence="3">
    <location>
        <begin position="222"/>
        <end position="225"/>
    </location>
</feature>
<feature type="strand" evidence="3">
    <location>
        <begin position="241"/>
        <end position="249"/>
    </location>
</feature>
<feature type="strand" evidence="3">
    <location>
        <begin position="254"/>
        <end position="266"/>
    </location>
</feature>
<feature type="strand" evidence="3">
    <location>
        <begin position="268"/>
        <end position="275"/>
    </location>
</feature>
<feature type="strand" evidence="3">
    <location>
        <begin position="280"/>
        <end position="282"/>
    </location>
</feature>
<feature type="strand" evidence="3">
    <location>
        <begin position="287"/>
        <end position="296"/>
    </location>
</feature>
<feature type="strand" evidence="3">
    <location>
        <begin position="299"/>
        <end position="301"/>
    </location>
</feature>
<feature type="strand" evidence="3">
    <location>
        <begin position="306"/>
        <end position="308"/>
    </location>
</feature>
<feature type="strand" evidence="3">
    <location>
        <begin position="315"/>
        <end position="317"/>
    </location>
</feature>
<feature type="strand" evidence="3">
    <location>
        <begin position="328"/>
        <end position="330"/>
    </location>
</feature>
<feature type="turn" evidence="4">
    <location>
        <begin position="353"/>
        <end position="355"/>
    </location>
</feature>
<feature type="strand" evidence="4">
    <location>
        <begin position="367"/>
        <end position="374"/>
    </location>
</feature>
<feature type="strand" evidence="4">
    <location>
        <begin position="377"/>
        <end position="382"/>
    </location>
</feature>
<feature type="helix" evidence="4">
    <location>
        <begin position="384"/>
        <end position="404"/>
    </location>
</feature>
<feature type="turn" evidence="4">
    <location>
        <begin position="405"/>
        <end position="407"/>
    </location>
</feature>
<feature type="helix" evidence="4">
    <location>
        <begin position="421"/>
        <end position="472"/>
    </location>
</feature>
<feature type="helix" evidence="4">
    <location>
        <begin position="473"/>
        <end position="475"/>
    </location>
</feature>
<feature type="strand" evidence="4">
    <location>
        <begin position="476"/>
        <end position="478"/>
    </location>
</feature>
<feature type="strand" evidence="4">
    <location>
        <begin position="480"/>
        <end position="488"/>
    </location>
</feature>
<feature type="helix" evidence="4">
    <location>
        <begin position="492"/>
        <end position="499"/>
    </location>
</feature>
<feature type="helix" evidence="4">
    <location>
        <begin position="505"/>
        <end position="517"/>
    </location>
</feature>
<keyword id="KW-0002">3D-structure</keyword>
<keyword id="KW-1167">Clathrin- and caveolin-independent endocytosis of virus by host</keyword>
<keyword id="KW-1165">Clathrin-mediated endocytosis of virus by host</keyword>
<keyword id="KW-1015">Disulfide bond</keyword>
<keyword id="KW-1170">Fusion of virus membrane with host endosomal membrane</keyword>
<keyword id="KW-1168">Fusion of virus membrane with host membrane</keyword>
<keyword id="KW-0325">Glycoprotein</keyword>
<keyword id="KW-0348">Hemagglutinin</keyword>
<keyword id="KW-1032">Host cell membrane</keyword>
<keyword id="KW-1043">Host membrane</keyword>
<keyword id="KW-0945">Host-virus interaction</keyword>
<keyword id="KW-0449">Lipoprotein</keyword>
<keyword id="KW-0472">Membrane</keyword>
<keyword id="KW-0564">Palmitate</keyword>
<keyword id="KW-1185">Reference proteome</keyword>
<keyword id="KW-0732">Signal</keyword>
<keyword id="KW-0812">Transmembrane</keyword>
<keyword id="KW-1133">Transmembrane helix</keyword>
<keyword id="KW-1161">Viral attachment to host cell</keyword>
<keyword id="KW-0261">Viral envelope protein</keyword>
<keyword id="KW-1162">Viral penetration into host cytoplasm</keyword>
<keyword id="KW-0946">Virion</keyword>
<keyword id="KW-1164">Virus endocytosis by host</keyword>
<keyword id="KW-1160">Virus entry into host cell</keyword>
<organismHost>
    <name type="scientific">Aves</name>
    <dbReference type="NCBI Taxonomy" id="8782"/>
</organismHost>
<organismHost>
    <name type="scientific">Felis catus</name>
    <name type="common">Cat</name>
    <name type="synonym">Felis silvestris catus</name>
    <dbReference type="NCBI Taxonomy" id="9685"/>
</organismHost>
<organismHost>
    <name type="scientific">Homo sapiens</name>
    <name type="common">Human</name>
    <dbReference type="NCBI Taxonomy" id="9606"/>
</organismHost>
<organismHost>
    <name type="scientific">Panthera pardus</name>
    <name type="common">Leopard</name>
    <name type="synonym">Felis pardus</name>
    <dbReference type="NCBI Taxonomy" id="9691"/>
</organismHost>
<organismHost>
    <name type="scientific">Panthera tigris</name>
    <name type="common">Tiger</name>
    <dbReference type="NCBI Taxonomy" id="9694"/>
</organismHost>
<organismHost>
    <name type="scientific">Sus scrofa</name>
    <name type="common">Pig</name>
    <dbReference type="NCBI Taxonomy" id="9823"/>
</organismHost>